<proteinExistence type="evidence at protein level"/>
<evidence type="ECO:0000250" key="1"/>
<evidence type="ECO:0000250" key="2">
    <source>
        <dbReference type="UniProtKB" id="Q6RW13"/>
    </source>
</evidence>
<evidence type="ECO:0000255" key="3"/>
<evidence type="ECO:0000269" key="4">
    <source>
    </source>
</evidence>
<evidence type="ECO:0000269" key="5">
    <source>
    </source>
</evidence>
<evidence type="ECO:0000305" key="6"/>
<keyword id="KW-0968">Cytoplasmic vesicle</keyword>
<keyword id="KW-0256">Endoplasmic reticulum</keyword>
<keyword id="KW-0333">Golgi apparatus</keyword>
<keyword id="KW-0472">Membrane</keyword>
<keyword id="KW-0597">Phosphoprotein</keyword>
<keyword id="KW-1185">Reference proteome</keyword>
<keyword id="KW-0812">Transmembrane</keyword>
<keyword id="KW-1133">Transmembrane helix</keyword>
<gene>
    <name type="primary">Agtrap</name>
    <name type="synonym">Atrap</name>
</gene>
<comment type="function">
    <text evidence="4 5">Appears to be a negative regulator of type-1 angiotensin II receptor-mediated signaling by regulating receptor internalization as well as mechanism of receptor desensitization such as phosphorylation. Also induces a decrease in angiotensin II-stimulated transcriptional activity. May play a role of negative regulator in cardiomyocyte hypertrophy induced by angiotensin II through an inhibition of p38 mitogen-activated protein kinase pathway.</text>
</comment>
<comment type="subunit">
    <text evidence="1 4">Interacts with RACK1 (By similarity), and with the C-terminal region of AGTR1.</text>
</comment>
<comment type="interaction">
    <interactant intactId="EBI-645964">
        <id>Q9WVK0</id>
    </interactant>
    <interactant intactId="EBI-765178">
        <id>P29754</id>
        <label>Agtr1a</label>
    </interactant>
    <organismsDiffer>false</organismsDiffer>
    <experiments>5</experiments>
</comment>
<comment type="subcellular location">
    <subcellularLocation>
        <location evidence="1">Endoplasmic reticulum membrane</location>
        <topology evidence="1">Multi-pass membrane protein</topology>
    </subcellularLocation>
    <subcellularLocation>
        <location evidence="1">Golgi apparatus membrane</location>
        <topology evidence="1">Multi-pass membrane protein</topology>
    </subcellularLocation>
    <subcellularLocation>
        <location evidence="1">Cytoplasmic vesicle membrane</location>
        <topology evidence="1">Multi-pass membrane protein</topology>
    </subcellularLocation>
    <text evidence="1">Present in perinuclear vesicular membranes, Endoplasmic reticulum, Golgi and endocytic vesicles.</text>
</comment>
<comment type="tissue specificity">
    <text evidence="4">Ubiquitous but more abundant in kidney, testis and heart.</text>
</comment>
<reference key="1">
    <citation type="journal article" date="1999" name="J. Biol. Chem.">
        <title>Cloning and characterization of ATRAP, a novel protein that interacts with the angiotensin II type 1 receptor.</title>
        <authorList>
            <person name="Daviet L."/>
            <person name="Lehtonen J.Y.A."/>
            <person name="Tamura K."/>
            <person name="Griese D.P."/>
            <person name="Horiuchi M."/>
            <person name="Dzau V.J."/>
        </authorList>
    </citation>
    <scope>NUCLEOTIDE SEQUENCE [MRNA]</scope>
    <scope>FUNCTION</scope>
    <scope>TISSUE SPECIFICITY</scope>
    <scope>INTERACTION WITH AGTR1</scope>
    <source>
        <strain>DBA/2J</strain>
        <tissue>Kidney</tissue>
    </source>
</reference>
<reference key="2">
    <citation type="journal article" date="2005" name="Science">
        <title>The transcriptional landscape of the mammalian genome.</title>
        <authorList>
            <person name="Carninci P."/>
            <person name="Kasukawa T."/>
            <person name="Katayama S."/>
            <person name="Gough J."/>
            <person name="Frith M.C."/>
            <person name="Maeda N."/>
            <person name="Oyama R."/>
            <person name="Ravasi T."/>
            <person name="Lenhard B."/>
            <person name="Wells C."/>
            <person name="Kodzius R."/>
            <person name="Shimokawa K."/>
            <person name="Bajic V.B."/>
            <person name="Brenner S.E."/>
            <person name="Batalov S."/>
            <person name="Forrest A.R."/>
            <person name="Zavolan M."/>
            <person name="Davis M.J."/>
            <person name="Wilming L.G."/>
            <person name="Aidinis V."/>
            <person name="Allen J.E."/>
            <person name="Ambesi-Impiombato A."/>
            <person name="Apweiler R."/>
            <person name="Aturaliya R.N."/>
            <person name="Bailey T.L."/>
            <person name="Bansal M."/>
            <person name="Baxter L."/>
            <person name="Beisel K.W."/>
            <person name="Bersano T."/>
            <person name="Bono H."/>
            <person name="Chalk A.M."/>
            <person name="Chiu K.P."/>
            <person name="Choudhary V."/>
            <person name="Christoffels A."/>
            <person name="Clutterbuck D.R."/>
            <person name="Crowe M.L."/>
            <person name="Dalla E."/>
            <person name="Dalrymple B.P."/>
            <person name="de Bono B."/>
            <person name="Della Gatta G."/>
            <person name="di Bernardo D."/>
            <person name="Down T."/>
            <person name="Engstrom P."/>
            <person name="Fagiolini M."/>
            <person name="Faulkner G."/>
            <person name="Fletcher C.F."/>
            <person name="Fukushima T."/>
            <person name="Furuno M."/>
            <person name="Futaki S."/>
            <person name="Gariboldi M."/>
            <person name="Georgii-Hemming P."/>
            <person name="Gingeras T.R."/>
            <person name="Gojobori T."/>
            <person name="Green R.E."/>
            <person name="Gustincich S."/>
            <person name="Harbers M."/>
            <person name="Hayashi Y."/>
            <person name="Hensch T.K."/>
            <person name="Hirokawa N."/>
            <person name="Hill D."/>
            <person name="Huminiecki L."/>
            <person name="Iacono M."/>
            <person name="Ikeo K."/>
            <person name="Iwama A."/>
            <person name="Ishikawa T."/>
            <person name="Jakt M."/>
            <person name="Kanapin A."/>
            <person name="Katoh M."/>
            <person name="Kawasawa Y."/>
            <person name="Kelso J."/>
            <person name="Kitamura H."/>
            <person name="Kitano H."/>
            <person name="Kollias G."/>
            <person name="Krishnan S.P."/>
            <person name="Kruger A."/>
            <person name="Kummerfeld S.K."/>
            <person name="Kurochkin I.V."/>
            <person name="Lareau L.F."/>
            <person name="Lazarevic D."/>
            <person name="Lipovich L."/>
            <person name="Liu J."/>
            <person name="Liuni S."/>
            <person name="McWilliam S."/>
            <person name="Madan Babu M."/>
            <person name="Madera M."/>
            <person name="Marchionni L."/>
            <person name="Matsuda H."/>
            <person name="Matsuzawa S."/>
            <person name="Miki H."/>
            <person name="Mignone F."/>
            <person name="Miyake S."/>
            <person name="Morris K."/>
            <person name="Mottagui-Tabar S."/>
            <person name="Mulder N."/>
            <person name="Nakano N."/>
            <person name="Nakauchi H."/>
            <person name="Ng P."/>
            <person name="Nilsson R."/>
            <person name="Nishiguchi S."/>
            <person name="Nishikawa S."/>
            <person name="Nori F."/>
            <person name="Ohara O."/>
            <person name="Okazaki Y."/>
            <person name="Orlando V."/>
            <person name="Pang K.C."/>
            <person name="Pavan W.J."/>
            <person name="Pavesi G."/>
            <person name="Pesole G."/>
            <person name="Petrovsky N."/>
            <person name="Piazza S."/>
            <person name="Reed J."/>
            <person name="Reid J.F."/>
            <person name="Ring B.Z."/>
            <person name="Ringwald M."/>
            <person name="Rost B."/>
            <person name="Ruan Y."/>
            <person name="Salzberg S.L."/>
            <person name="Sandelin A."/>
            <person name="Schneider C."/>
            <person name="Schoenbach C."/>
            <person name="Sekiguchi K."/>
            <person name="Semple C.A."/>
            <person name="Seno S."/>
            <person name="Sessa L."/>
            <person name="Sheng Y."/>
            <person name="Shibata Y."/>
            <person name="Shimada H."/>
            <person name="Shimada K."/>
            <person name="Silva D."/>
            <person name="Sinclair B."/>
            <person name="Sperling S."/>
            <person name="Stupka E."/>
            <person name="Sugiura K."/>
            <person name="Sultana R."/>
            <person name="Takenaka Y."/>
            <person name="Taki K."/>
            <person name="Tammoja K."/>
            <person name="Tan S.L."/>
            <person name="Tang S."/>
            <person name="Taylor M.S."/>
            <person name="Tegner J."/>
            <person name="Teichmann S.A."/>
            <person name="Ueda H.R."/>
            <person name="van Nimwegen E."/>
            <person name="Verardo R."/>
            <person name="Wei C.L."/>
            <person name="Yagi K."/>
            <person name="Yamanishi H."/>
            <person name="Zabarovsky E."/>
            <person name="Zhu S."/>
            <person name="Zimmer A."/>
            <person name="Hide W."/>
            <person name="Bult C."/>
            <person name="Grimmond S.M."/>
            <person name="Teasdale R.D."/>
            <person name="Liu E.T."/>
            <person name="Brusic V."/>
            <person name="Quackenbush J."/>
            <person name="Wahlestedt C."/>
            <person name="Mattick J.S."/>
            <person name="Hume D.A."/>
            <person name="Kai C."/>
            <person name="Sasaki D."/>
            <person name="Tomaru Y."/>
            <person name="Fukuda S."/>
            <person name="Kanamori-Katayama M."/>
            <person name="Suzuki M."/>
            <person name="Aoki J."/>
            <person name="Arakawa T."/>
            <person name="Iida J."/>
            <person name="Imamura K."/>
            <person name="Itoh M."/>
            <person name="Kato T."/>
            <person name="Kawaji H."/>
            <person name="Kawagashira N."/>
            <person name="Kawashima T."/>
            <person name="Kojima M."/>
            <person name="Kondo S."/>
            <person name="Konno H."/>
            <person name="Nakano K."/>
            <person name="Ninomiya N."/>
            <person name="Nishio T."/>
            <person name="Okada M."/>
            <person name="Plessy C."/>
            <person name="Shibata K."/>
            <person name="Shiraki T."/>
            <person name="Suzuki S."/>
            <person name="Tagami M."/>
            <person name="Waki K."/>
            <person name="Watahiki A."/>
            <person name="Okamura-Oho Y."/>
            <person name="Suzuki H."/>
            <person name="Kawai J."/>
            <person name="Hayashizaki Y."/>
        </authorList>
    </citation>
    <scope>NUCLEOTIDE SEQUENCE [LARGE SCALE MRNA]</scope>
    <source>
        <strain>C57BL/6J</strain>
        <tissue>Bone</tissue>
        <tissue>Bone marrow</tissue>
        <tissue>Pancreas</tissue>
    </source>
</reference>
<reference key="3">
    <citation type="journal article" date="2009" name="PLoS Biol.">
        <title>Lineage-specific biology revealed by a finished genome assembly of the mouse.</title>
        <authorList>
            <person name="Church D.M."/>
            <person name="Goodstadt L."/>
            <person name="Hillier L.W."/>
            <person name="Zody M.C."/>
            <person name="Goldstein S."/>
            <person name="She X."/>
            <person name="Bult C.J."/>
            <person name="Agarwala R."/>
            <person name="Cherry J.L."/>
            <person name="DiCuccio M."/>
            <person name="Hlavina W."/>
            <person name="Kapustin Y."/>
            <person name="Meric P."/>
            <person name="Maglott D."/>
            <person name="Birtle Z."/>
            <person name="Marques A.C."/>
            <person name="Graves T."/>
            <person name="Zhou S."/>
            <person name="Teague B."/>
            <person name="Potamousis K."/>
            <person name="Churas C."/>
            <person name="Place M."/>
            <person name="Herschleb J."/>
            <person name="Runnheim R."/>
            <person name="Forrest D."/>
            <person name="Amos-Landgraf J."/>
            <person name="Schwartz D.C."/>
            <person name="Cheng Z."/>
            <person name="Lindblad-Toh K."/>
            <person name="Eichler E.E."/>
            <person name="Ponting C.P."/>
        </authorList>
    </citation>
    <scope>NUCLEOTIDE SEQUENCE [LARGE SCALE GENOMIC DNA]</scope>
    <source>
        <strain>C57BL/6J</strain>
    </source>
</reference>
<reference key="4">
    <citation type="submission" date="2005-07" db="EMBL/GenBank/DDBJ databases">
        <authorList>
            <person name="Mural R.J."/>
            <person name="Adams M.D."/>
            <person name="Myers E.W."/>
            <person name="Smith H.O."/>
            <person name="Venter J.C."/>
        </authorList>
    </citation>
    <scope>NUCLEOTIDE SEQUENCE [LARGE SCALE GENOMIC DNA]</scope>
</reference>
<reference key="5">
    <citation type="journal article" date="2004" name="Genome Res.">
        <title>The status, quality, and expansion of the NIH full-length cDNA project: the Mammalian Gene Collection (MGC).</title>
        <authorList>
            <consortium name="The MGC Project Team"/>
        </authorList>
    </citation>
    <scope>NUCLEOTIDE SEQUENCE [LARGE SCALE MRNA]</scope>
    <source>
        <strain>C57BL/6J</strain>
        <strain>FVB/N</strain>
        <tissue>Mammary tumor</tissue>
    </source>
</reference>
<reference key="6">
    <citation type="journal article" date="2005" name="FEBS Lett.">
        <title>The novel angiotensin II type 1 receptor (AT1R)-associated protein ATRAP downregulates AT1R and ameliorates cardiomyocyte hypertrophy.</title>
        <authorList>
            <person name="Tanaka Y."/>
            <person name="Tamura K."/>
            <person name="Koide Y."/>
            <person name="Sakai M."/>
            <person name="Tsurumi Y."/>
            <person name="Noda Y."/>
            <person name="Umemura M."/>
            <person name="Ishigami T."/>
            <person name="Uchino K."/>
            <person name="Kimura K."/>
            <person name="Horiuchi M."/>
            <person name="Umemura S."/>
        </authorList>
    </citation>
    <scope>FUNCTION</scope>
</reference>
<reference key="7">
    <citation type="journal article" date="2009" name="Immunity">
        <title>The phagosomal proteome in interferon-gamma-activated macrophages.</title>
        <authorList>
            <person name="Trost M."/>
            <person name="English L."/>
            <person name="Lemieux S."/>
            <person name="Courcelles M."/>
            <person name="Desjardins M."/>
            <person name="Thibault P."/>
        </authorList>
    </citation>
    <scope>IDENTIFICATION BY MASS SPECTROMETRY [LARGE SCALE ANALYSIS]</scope>
</reference>
<reference key="8">
    <citation type="journal article" date="2010" name="Cell">
        <title>A tissue-specific atlas of mouse protein phosphorylation and expression.</title>
        <authorList>
            <person name="Huttlin E.L."/>
            <person name="Jedrychowski M.P."/>
            <person name="Elias J.E."/>
            <person name="Goswami T."/>
            <person name="Rad R."/>
            <person name="Beausoleil S.A."/>
            <person name="Villen J."/>
            <person name="Haas W."/>
            <person name="Sowa M.E."/>
            <person name="Gygi S.P."/>
        </authorList>
    </citation>
    <scope>IDENTIFICATION BY MASS SPECTROMETRY [LARGE SCALE ANALYSIS]</scope>
    <source>
        <tissue>Brain</tissue>
        <tissue>Heart</tissue>
        <tissue>Kidney</tissue>
        <tissue>Liver</tissue>
        <tissue>Lung</tissue>
        <tissue>Pancreas</tissue>
        <tissue>Spleen</tissue>
        <tissue>Testis</tissue>
    </source>
</reference>
<organism>
    <name type="scientific">Mus musculus</name>
    <name type="common">Mouse</name>
    <dbReference type="NCBI Taxonomy" id="10090"/>
    <lineage>
        <taxon>Eukaryota</taxon>
        <taxon>Metazoa</taxon>
        <taxon>Chordata</taxon>
        <taxon>Craniata</taxon>
        <taxon>Vertebrata</taxon>
        <taxon>Euteleostomi</taxon>
        <taxon>Mammalia</taxon>
        <taxon>Eutheria</taxon>
        <taxon>Euarchontoglires</taxon>
        <taxon>Glires</taxon>
        <taxon>Rodentia</taxon>
        <taxon>Myomorpha</taxon>
        <taxon>Muroidea</taxon>
        <taxon>Muridae</taxon>
        <taxon>Murinae</taxon>
        <taxon>Mus</taxon>
        <taxon>Mus</taxon>
    </lineage>
</organism>
<sequence>MELPAVNLKVILLVHWLLTTWGCLVFSSSYAWGNFTILALGVWAVAQRDSIDAIGMFLGGLVATIFLDIIYISIFYSSVATGDTGRFGAGMAILSLLLKPFSCCLVYHMHRERGGELPLRPDFFGPSQEHSAYQTIDSSSDAAADPFASLENKGQAVPRGY</sequence>
<dbReference type="EMBL" id="AF102548">
    <property type="protein sequence ID" value="AAD25997.1"/>
    <property type="molecule type" value="mRNA"/>
</dbReference>
<dbReference type="EMBL" id="AK007383">
    <property type="protein sequence ID" value="BAB25001.1"/>
    <property type="molecule type" value="mRNA"/>
</dbReference>
<dbReference type="EMBL" id="AK007502">
    <property type="protein sequence ID" value="BAB25074.1"/>
    <property type="molecule type" value="mRNA"/>
</dbReference>
<dbReference type="EMBL" id="AK036598">
    <property type="protein sequence ID" value="BAC29501.1"/>
    <property type="molecule type" value="mRNA"/>
</dbReference>
<dbReference type="EMBL" id="AK152467">
    <property type="protein sequence ID" value="BAE31243.1"/>
    <property type="molecule type" value="mRNA"/>
</dbReference>
<dbReference type="EMBL" id="CU207376">
    <property type="protein sequence ID" value="CAQ51920.1"/>
    <property type="molecule type" value="Genomic_DNA"/>
</dbReference>
<dbReference type="EMBL" id="AL606929">
    <property type="protein sequence ID" value="CAM14899.1"/>
    <property type="molecule type" value="Genomic_DNA"/>
</dbReference>
<dbReference type="EMBL" id="CH466594">
    <property type="protein sequence ID" value="EDL14800.1"/>
    <property type="molecule type" value="Genomic_DNA"/>
</dbReference>
<dbReference type="EMBL" id="BC046820">
    <property type="protein sequence ID" value="AAH46820.1"/>
    <property type="molecule type" value="mRNA"/>
</dbReference>
<dbReference type="EMBL" id="BC057196">
    <property type="protein sequence ID" value="AAH57196.1"/>
    <property type="molecule type" value="mRNA"/>
</dbReference>
<dbReference type="CCDS" id="CCDS18930.1"/>
<dbReference type="RefSeq" id="NP_033772.2">
    <property type="nucleotide sequence ID" value="NM_009642.5"/>
</dbReference>
<dbReference type="BioGRID" id="198032">
    <property type="interactions" value="3"/>
</dbReference>
<dbReference type="CORUM" id="Q9WVK0"/>
<dbReference type="FunCoup" id="Q9WVK0">
    <property type="interactions" value="929"/>
</dbReference>
<dbReference type="IntAct" id="Q9WVK0">
    <property type="interactions" value="2"/>
</dbReference>
<dbReference type="MINT" id="Q9WVK0"/>
<dbReference type="STRING" id="10090.ENSMUSP00000030865"/>
<dbReference type="iPTMnet" id="Q9WVK0"/>
<dbReference type="PhosphoSitePlus" id="Q9WVK0"/>
<dbReference type="SwissPalm" id="Q9WVK0"/>
<dbReference type="PaxDb" id="10090-ENSMUSP00000030865"/>
<dbReference type="PeptideAtlas" id="Q9WVK0"/>
<dbReference type="ProteomicsDB" id="273581"/>
<dbReference type="Pumba" id="Q9WVK0"/>
<dbReference type="Antibodypedia" id="28197">
    <property type="antibodies" value="226 antibodies from 27 providers"/>
</dbReference>
<dbReference type="DNASU" id="11610"/>
<dbReference type="Ensembl" id="ENSMUST00000030865.9">
    <property type="protein sequence ID" value="ENSMUSP00000030865.9"/>
    <property type="gene ID" value="ENSMUSG00000029007.9"/>
</dbReference>
<dbReference type="GeneID" id="11610"/>
<dbReference type="KEGG" id="mmu:11610"/>
<dbReference type="UCSC" id="uc008vtz.1">
    <property type="organism name" value="mouse"/>
</dbReference>
<dbReference type="AGR" id="MGI:1339977"/>
<dbReference type="CTD" id="57085"/>
<dbReference type="MGI" id="MGI:1339977">
    <property type="gene designation" value="Agtrap"/>
</dbReference>
<dbReference type="VEuPathDB" id="HostDB:ENSMUSG00000029007"/>
<dbReference type="eggNOG" id="ENOG502S36M">
    <property type="taxonomic scope" value="Eukaryota"/>
</dbReference>
<dbReference type="GeneTree" id="ENSGT00390000017402"/>
<dbReference type="HOGENOM" id="CLU_126745_0_0_1"/>
<dbReference type="InParanoid" id="Q9WVK0"/>
<dbReference type="OMA" id="IMNGWAV"/>
<dbReference type="OrthoDB" id="8191171at2759"/>
<dbReference type="PhylomeDB" id="Q9WVK0"/>
<dbReference type="TreeFam" id="TF324477"/>
<dbReference type="BioGRID-ORCS" id="11610">
    <property type="hits" value="2 hits in 77 CRISPR screens"/>
</dbReference>
<dbReference type="ChiTaRS" id="Agtrap">
    <property type="organism name" value="mouse"/>
</dbReference>
<dbReference type="PRO" id="PR:Q9WVK0"/>
<dbReference type="Proteomes" id="UP000000589">
    <property type="component" value="Chromosome 4"/>
</dbReference>
<dbReference type="RNAct" id="Q9WVK0">
    <property type="molecule type" value="protein"/>
</dbReference>
<dbReference type="Bgee" id="ENSMUSG00000029007">
    <property type="expression patterns" value="Expressed in embryonic cell in blastocyst and 206 other cell types or tissues"/>
</dbReference>
<dbReference type="GO" id="GO:0005938">
    <property type="term" value="C:cell cortex"/>
    <property type="evidence" value="ECO:0000314"/>
    <property type="project" value="UniProtKB"/>
</dbReference>
<dbReference type="GO" id="GO:0030659">
    <property type="term" value="C:cytoplasmic vesicle membrane"/>
    <property type="evidence" value="ECO:0007669"/>
    <property type="project" value="UniProtKB-SubCell"/>
</dbReference>
<dbReference type="GO" id="GO:0005789">
    <property type="term" value="C:endoplasmic reticulum membrane"/>
    <property type="evidence" value="ECO:0007669"/>
    <property type="project" value="UniProtKB-SubCell"/>
</dbReference>
<dbReference type="GO" id="GO:0000139">
    <property type="term" value="C:Golgi membrane"/>
    <property type="evidence" value="ECO:0007669"/>
    <property type="project" value="UniProtKB-SubCell"/>
</dbReference>
<dbReference type="GO" id="GO:0005886">
    <property type="term" value="C:plasma membrane"/>
    <property type="evidence" value="ECO:0000314"/>
    <property type="project" value="UniProtKB"/>
</dbReference>
<dbReference type="GO" id="GO:0004945">
    <property type="term" value="F:angiotensin type II receptor activity"/>
    <property type="evidence" value="ECO:0000315"/>
    <property type="project" value="MGI"/>
</dbReference>
<dbReference type="GO" id="GO:0008217">
    <property type="term" value="P:regulation of blood pressure"/>
    <property type="evidence" value="ECO:0000315"/>
    <property type="project" value="MGI"/>
</dbReference>
<dbReference type="GO" id="GO:0001666">
    <property type="term" value="P:response to hypoxia"/>
    <property type="evidence" value="ECO:0007669"/>
    <property type="project" value="Ensembl"/>
</dbReference>
<dbReference type="InterPro" id="IPR009436">
    <property type="entry name" value="AGTRAP"/>
</dbReference>
<dbReference type="PANTHER" id="PTHR16521">
    <property type="entry name" value="TYPE-1 ANGIOTENSIN II RECEPTOR-ASSOCIATED PROTEIN"/>
    <property type="match status" value="1"/>
</dbReference>
<dbReference type="PANTHER" id="PTHR16521:SF3">
    <property type="entry name" value="TYPE-1 ANGIOTENSIN II RECEPTOR-ASSOCIATED PROTEIN"/>
    <property type="match status" value="1"/>
</dbReference>
<dbReference type="Pfam" id="PF06396">
    <property type="entry name" value="AGTRAP"/>
    <property type="match status" value="1"/>
</dbReference>
<dbReference type="SMART" id="SM00805">
    <property type="entry name" value="AGTRAP"/>
    <property type="match status" value="1"/>
</dbReference>
<name>ATRAP_MOUSE</name>
<feature type="chain" id="PRO_0000064736" description="Type-1 angiotensin II receptor-associated protein">
    <location>
        <begin position="1"/>
        <end position="161"/>
    </location>
</feature>
<feature type="topological domain" description="Extracellular" evidence="3">
    <location>
        <begin position="1"/>
        <end position="26"/>
    </location>
</feature>
<feature type="transmembrane region" description="Helical" evidence="3">
    <location>
        <begin position="27"/>
        <end position="47"/>
    </location>
</feature>
<feature type="topological domain" description="Cytoplasmic" evidence="3">
    <location>
        <begin position="48"/>
        <end position="53"/>
    </location>
</feature>
<feature type="transmembrane region" description="Helical" evidence="3">
    <location>
        <begin position="54"/>
        <end position="74"/>
    </location>
</feature>
<feature type="topological domain" description="Extracellular" evidence="3">
    <location>
        <begin position="75"/>
        <end position="86"/>
    </location>
</feature>
<feature type="transmembrane region" description="Helical" evidence="3">
    <location>
        <begin position="87"/>
        <end position="107"/>
    </location>
</feature>
<feature type="topological domain" description="Cytoplasmic" evidence="3">
    <location>
        <begin position="108"/>
        <end position="161"/>
    </location>
</feature>
<feature type="region of interest" description="Interaction with AGTR1" evidence="1">
    <location>
        <begin position="110"/>
        <end position="122"/>
    </location>
</feature>
<feature type="modified residue" description="Phosphoserine" evidence="2">
    <location>
        <position position="127"/>
    </location>
</feature>
<feature type="modified residue" description="Phosphothreonine" evidence="2">
    <location>
        <position position="135"/>
    </location>
</feature>
<feature type="modified residue" description="Phosphoserine" evidence="2">
    <location>
        <position position="138"/>
    </location>
</feature>
<feature type="sequence conflict" description="In Ref. 2; BAB25074." evidence="6" ref="2">
    <original>F</original>
    <variation>L</variation>
    <location>
        <position position="35"/>
    </location>
</feature>
<feature type="sequence conflict" description="In Ref. 1; AAD25997, 3; CAQ51920 and 5; AAH57196." evidence="6" ref="1 3 5">
    <original>V</original>
    <variation>A</variation>
    <location>
        <position position="157"/>
    </location>
</feature>
<protein>
    <recommendedName>
        <fullName>Type-1 angiotensin II receptor-associated protein</fullName>
    </recommendedName>
    <alternativeName>
        <fullName>AT1 receptor-associated protein</fullName>
    </alternativeName>
</protein>
<accession>Q9WVK0</accession>
<accession>B2KFL8</accession>
<accession>Q3U7X6</accession>
<accession>Q9D8Z8</accession>
<accession>Q9D940</accession>